<sequence>MSANLAPQIVEQLDPVDGPAFQRLTGCTDAQLADLTRFQALLTEWNEVMNLVGPATLPTYWNRHAWDSAQLLKLAPDARTWADLGAGAGLPGVVLAILLKGTPGAKIHLVESMTKRCKFLRAVADALDLPVEIHNARAEELDLKVEIVTARACAPMVRLLGYAQPYLKRGATAWFLKGQDVASELAEAATYWKFESDLRPSLSDPRGQIVQVKGLKSVRKV</sequence>
<accession>B0T6E2</accession>
<evidence type="ECO:0000255" key="1">
    <source>
        <dbReference type="HAMAP-Rule" id="MF_00074"/>
    </source>
</evidence>
<proteinExistence type="inferred from homology"/>
<organism>
    <name type="scientific">Caulobacter sp. (strain K31)</name>
    <dbReference type="NCBI Taxonomy" id="366602"/>
    <lineage>
        <taxon>Bacteria</taxon>
        <taxon>Pseudomonadati</taxon>
        <taxon>Pseudomonadota</taxon>
        <taxon>Alphaproteobacteria</taxon>
        <taxon>Caulobacterales</taxon>
        <taxon>Caulobacteraceae</taxon>
        <taxon>Caulobacter</taxon>
    </lineage>
</organism>
<reference key="1">
    <citation type="submission" date="2008-01" db="EMBL/GenBank/DDBJ databases">
        <title>Complete sequence of chromosome of Caulobacter sp. K31.</title>
        <authorList>
            <consortium name="US DOE Joint Genome Institute"/>
            <person name="Copeland A."/>
            <person name="Lucas S."/>
            <person name="Lapidus A."/>
            <person name="Barry K."/>
            <person name="Glavina del Rio T."/>
            <person name="Dalin E."/>
            <person name="Tice H."/>
            <person name="Pitluck S."/>
            <person name="Bruce D."/>
            <person name="Goodwin L."/>
            <person name="Thompson L.S."/>
            <person name="Brettin T."/>
            <person name="Detter J.C."/>
            <person name="Han C."/>
            <person name="Schmutz J."/>
            <person name="Larimer F."/>
            <person name="Land M."/>
            <person name="Hauser L."/>
            <person name="Kyrpides N."/>
            <person name="Kim E."/>
            <person name="Stephens C."/>
            <person name="Richardson P."/>
        </authorList>
    </citation>
    <scope>NUCLEOTIDE SEQUENCE [LARGE SCALE GENOMIC DNA]</scope>
    <source>
        <strain>K31</strain>
    </source>
</reference>
<name>RSMG_CAUSK</name>
<gene>
    <name evidence="1" type="primary">rsmG</name>
    <name type="ordered locus">Caul_5025</name>
</gene>
<comment type="function">
    <text evidence="1">Specifically methylates the N7 position of guanine in position 527 of 16S rRNA.</text>
</comment>
<comment type="catalytic activity">
    <reaction evidence="1">
        <text>guanosine(527) in 16S rRNA + S-adenosyl-L-methionine = N(7)-methylguanosine(527) in 16S rRNA + S-adenosyl-L-homocysteine</text>
        <dbReference type="Rhea" id="RHEA:42732"/>
        <dbReference type="Rhea" id="RHEA-COMP:10209"/>
        <dbReference type="Rhea" id="RHEA-COMP:10210"/>
        <dbReference type="ChEBI" id="CHEBI:57856"/>
        <dbReference type="ChEBI" id="CHEBI:59789"/>
        <dbReference type="ChEBI" id="CHEBI:74269"/>
        <dbReference type="ChEBI" id="CHEBI:74480"/>
        <dbReference type="EC" id="2.1.1.170"/>
    </reaction>
</comment>
<comment type="subcellular location">
    <subcellularLocation>
        <location evidence="1">Cytoplasm</location>
    </subcellularLocation>
</comment>
<comment type="similarity">
    <text evidence="1">Belongs to the methyltransferase superfamily. RNA methyltransferase RsmG family.</text>
</comment>
<dbReference type="EC" id="2.1.1.170" evidence="1"/>
<dbReference type="EMBL" id="CP000927">
    <property type="protein sequence ID" value="ABZ74145.1"/>
    <property type="molecule type" value="Genomic_DNA"/>
</dbReference>
<dbReference type="SMR" id="B0T6E2"/>
<dbReference type="STRING" id="366602.Caul_5025"/>
<dbReference type="KEGG" id="cak:Caul_5025"/>
<dbReference type="eggNOG" id="COG0357">
    <property type="taxonomic scope" value="Bacteria"/>
</dbReference>
<dbReference type="HOGENOM" id="CLU_065341_1_0_5"/>
<dbReference type="OrthoDB" id="9808773at2"/>
<dbReference type="GO" id="GO:0005829">
    <property type="term" value="C:cytosol"/>
    <property type="evidence" value="ECO:0007669"/>
    <property type="project" value="TreeGrafter"/>
</dbReference>
<dbReference type="GO" id="GO:0070043">
    <property type="term" value="F:rRNA (guanine-N7-)-methyltransferase activity"/>
    <property type="evidence" value="ECO:0007669"/>
    <property type="project" value="UniProtKB-UniRule"/>
</dbReference>
<dbReference type="Gene3D" id="3.40.50.150">
    <property type="entry name" value="Vaccinia Virus protein VP39"/>
    <property type="match status" value="1"/>
</dbReference>
<dbReference type="HAMAP" id="MF_00074">
    <property type="entry name" value="16SrRNA_methyltr_G"/>
    <property type="match status" value="1"/>
</dbReference>
<dbReference type="InterPro" id="IPR003682">
    <property type="entry name" value="rRNA_ssu_MeTfrase_G"/>
</dbReference>
<dbReference type="InterPro" id="IPR029063">
    <property type="entry name" value="SAM-dependent_MTases_sf"/>
</dbReference>
<dbReference type="NCBIfam" id="TIGR00138">
    <property type="entry name" value="rsmG_gidB"/>
    <property type="match status" value="1"/>
</dbReference>
<dbReference type="PANTHER" id="PTHR31760">
    <property type="entry name" value="S-ADENOSYL-L-METHIONINE-DEPENDENT METHYLTRANSFERASES SUPERFAMILY PROTEIN"/>
    <property type="match status" value="1"/>
</dbReference>
<dbReference type="PANTHER" id="PTHR31760:SF0">
    <property type="entry name" value="S-ADENOSYL-L-METHIONINE-DEPENDENT METHYLTRANSFERASES SUPERFAMILY PROTEIN"/>
    <property type="match status" value="1"/>
</dbReference>
<dbReference type="Pfam" id="PF02527">
    <property type="entry name" value="GidB"/>
    <property type="match status" value="1"/>
</dbReference>
<dbReference type="PIRSF" id="PIRSF003078">
    <property type="entry name" value="GidB"/>
    <property type="match status" value="1"/>
</dbReference>
<dbReference type="SUPFAM" id="SSF53335">
    <property type="entry name" value="S-adenosyl-L-methionine-dependent methyltransferases"/>
    <property type="match status" value="1"/>
</dbReference>
<keyword id="KW-0963">Cytoplasm</keyword>
<keyword id="KW-0489">Methyltransferase</keyword>
<keyword id="KW-0698">rRNA processing</keyword>
<keyword id="KW-0949">S-adenosyl-L-methionine</keyword>
<keyword id="KW-0808">Transferase</keyword>
<protein>
    <recommendedName>
        <fullName evidence="1">Ribosomal RNA small subunit methyltransferase G</fullName>
        <ecNumber evidence="1">2.1.1.170</ecNumber>
    </recommendedName>
    <alternativeName>
        <fullName evidence="1">16S rRNA 7-methylguanosine methyltransferase</fullName>
        <shortName evidence="1">16S rRNA m7G methyltransferase</shortName>
    </alternativeName>
</protein>
<feature type="chain" id="PRO_0000335331" description="Ribosomal RNA small subunit methyltransferase G">
    <location>
        <begin position="1"/>
        <end position="221"/>
    </location>
</feature>
<feature type="binding site" evidence="1">
    <location>
        <position position="85"/>
    </location>
    <ligand>
        <name>S-adenosyl-L-methionine</name>
        <dbReference type="ChEBI" id="CHEBI:59789"/>
    </ligand>
</feature>
<feature type="binding site" evidence="1">
    <location>
        <position position="90"/>
    </location>
    <ligand>
        <name>S-adenosyl-L-methionine</name>
        <dbReference type="ChEBI" id="CHEBI:59789"/>
    </ligand>
</feature>
<feature type="binding site" evidence="1">
    <location>
        <begin position="138"/>
        <end position="139"/>
    </location>
    <ligand>
        <name>S-adenosyl-L-methionine</name>
        <dbReference type="ChEBI" id="CHEBI:59789"/>
    </ligand>
</feature>
<feature type="binding site" evidence="1">
    <location>
        <position position="151"/>
    </location>
    <ligand>
        <name>S-adenosyl-L-methionine</name>
        <dbReference type="ChEBI" id="CHEBI:59789"/>
    </ligand>
</feature>